<organism>
    <name type="scientific">Mus musculus</name>
    <name type="common">Mouse</name>
    <dbReference type="NCBI Taxonomy" id="10090"/>
    <lineage>
        <taxon>Eukaryota</taxon>
        <taxon>Metazoa</taxon>
        <taxon>Chordata</taxon>
        <taxon>Craniata</taxon>
        <taxon>Vertebrata</taxon>
        <taxon>Euteleostomi</taxon>
        <taxon>Mammalia</taxon>
        <taxon>Eutheria</taxon>
        <taxon>Euarchontoglires</taxon>
        <taxon>Glires</taxon>
        <taxon>Rodentia</taxon>
        <taxon>Myomorpha</taxon>
        <taxon>Muroidea</taxon>
        <taxon>Muridae</taxon>
        <taxon>Murinae</taxon>
        <taxon>Mus</taxon>
        <taxon>Mus</taxon>
    </lineage>
</organism>
<accession>P06799</accession>
<sequence length="190" mass="21603">MARLCAFLMVLAVMSYWPTCCLGCDLPQTHNLRNKRALTLLVKMRRLSPLSCLKDRKDFGFPQAKVDAQQIQEAQAIPVLSELTQQILNIFTSKDSSAAWNATLLDSVCNDLHQQLNDLQGCLMQEVGVQELSLTQEDSLLAVRKYFHRITVFLREKKHSPCAWEVVRAEIWRALSSSANLLARLSEKKE</sequence>
<keyword id="KW-0051">Antiviral defense</keyword>
<keyword id="KW-0202">Cytokine</keyword>
<keyword id="KW-1015">Disulfide bond</keyword>
<keyword id="KW-0325">Glycoprotein</keyword>
<keyword id="KW-1185">Reference proteome</keyword>
<keyword id="KW-0964">Secreted</keyword>
<keyword id="KW-0732">Signal</keyword>
<dbReference type="EMBL" id="M13710">
    <property type="protein sequence ID" value="AAA37888.1"/>
    <property type="molecule type" value="Genomic_DNA"/>
</dbReference>
<dbReference type="PIR" id="I49772">
    <property type="entry name" value="I49772"/>
</dbReference>
<dbReference type="SMR" id="P06799"/>
<dbReference type="FunCoup" id="P06799">
    <property type="interactions" value="532"/>
</dbReference>
<dbReference type="GlyCosmos" id="P06799">
    <property type="glycosylation" value="1 site, No reported glycans"/>
</dbReference>
<dbReference type="GlyGen" id="P06799">
    <property type="glycosylation" value="1 site"/>
</dbReference>
<dbReference type="AGR" id="MGI:107661"/>
<dbReference type="MGI" id="MGI:107661">
    <property type="gene designation" value="Ifna7"/>
</dbReference>
<dbReference type="InParanoid" id="P06799"/>
<dbReference type="OrthoDB" id="8922121at2759"/>
<dbReference type="PhylomeDB" id="P06799"/>
<dbReference type="Reactome" id="R-MMU-909733">
    <property type="pathway name" value="Interferon alpha/beta signaling"/>
</dbReference>
<dbReference type="Reactome" id="R-MMU-912694">
    <property type="pathway name" value="Regulation of IFNA/IFNB signaling"/>
</dbReference>
<dbReference type="PRO" id="PR:P06799"/>
<dbReference type="Proteomes" id="UP000000589">
    <property type="component" value="Unplaced"/>
</dbReference>
<dbReference type="RNAct" id="P06799">
    <property type="molecule type" value="protein"/>
</dbReference>
<dbReference type="GO" id="GO:0005615">
    <property type="term" value="C:extracellular space"/>
    <property type="evidence" value="ECO:0007669"/>
    <property type="project" value="UniProtKB-KW"/>
</dbReference>
<dbReference type="GO" id="GO:0005125">
    <property type="term" value="F:cytokine activity"/>
    <property type="evidence" value="ECO:0007669"/>
    <property type="project" value="UniProtKB-KW"/>
</dbReference>
<dbReference type="GO" id="GO:0005126">
    <property type="term" value="F:cytokine receptor binding"/>
    <property type="evidence" value="ECO:0007669"/>
    <property type="project" value="InterPro"/>
</dbReference>
<dbReference type="GO" id="GO:0051607">
    <property type="term" value="P:defense response to virus"/>
    <property type="evidence" value="ECO:0007669"/>
    <property type="project" value="UniProtKB-KW"/>
</dbReference>
<dbReference type="CDD" id="cd00095">
    <property type="entry name" value="IFab"/>
    <property type="match status" value="1"/>
</dbReference>
<dbReference type="FunFam" id="1.20.1250.10:FF:000001">
    <property type="entry name" value="Interferon alpha"/>
    <property type="match status" value="1"/>
</dbReference>
<dbReference type="Gene3D" id="1.20.1250.10">
    <property type="match status" value="1"/>
</dbReference>
<dbReference type="InterPro" id="IPR009079">
    <property type="entry name" value="4_helix_cytokine-like_core"/>
</dbReference>
<dbReference type="InterPro" id="IPR000471">
    <property type="entry name" value="Interferon_alpha/beta/delta"/>
</dbReference>
<dbReference type="PANTHER" id="PTHR11691:SF74">
    <property type="entry name" value="ALPHA-INTERFERON-RELATED"/>
    <property type="match status" value="1"/>
</dbReference>
<dbReference type="PANTHER" id="PTHR11691">
    <property type="entry name" value="TYPE I INTERFERON"/>
    <property type="match status" value="1"/>
</dbReference>
<dbReference type="Pfam" id="PF00143">
    <property type="entry name" value="Interferon"/>
    <property type="match status" value="1"/>
</dbReference>
<dbReference type="PRINTS" id="PR00266">
    <property type="entry name" value="INTERFERONAB"/>
</dbReference>
<dbReference type="SMART" id="SM00076">
    <property type="entry name" value="IFabd"/>
    <property type="match status" value="1"/>
</dbReference>
<dbReference type="SUPFAM" id="SSF47266">
    <property type="entry name" value="4-helical cytokines"/>
    <property type="match status" value="1"/>
</dbReference>
<dbReference type="PROSITE" id="PS00252">
    <property type="entry name" value="INTERFERON_A_B_D"/>
    <property type="match status" value="1"/>
</dbReference>
<feature type="signal peptide">
    <location>
        <begin position="1"/>
        <end position="23"/>
    </location>
</feature>
<feature type="chain" id="PRO_0000016380" description="Interferon alpha-7">
    <location>
        <begin position="24"/>
        <end position="190"/>
    </location>
</feature>
<feature type="glycosylation site" description="N-linked (GlcNAc...) asparagine" evidence="2">
    <location>
        <position position="101"/>
    </location>
</feature>
<feature type="disulfide bond" evidence="1">
    <location>
        <begin position="24"/>
        <end position="122"/>
    </location>
</feature>
<feature type="disulfide bond" evidence="1">
    <location>
        <begin position="52"/>
        <end position="162"/>
    </location>
</feature>
<comment type="function">
    <text>Produced by macrophages, IFN-alpha have antiviral activities. Interferon stimulates the production of two enzymes: a protein kinase and an oligoadenylate synthetase.</text>
</comment>
<comment type="subcellular location">
    <subcellularLocation>
        <location>Secreted</location>
    </subcellularLocation>
</comment>
<comment type="similarity">
    <text evidence="2">Belongs to the alpha/beta interferon family.</text>
</comment>
<proteinExistence type="inferred from homology"/>
<name>IFNA7_MOUSE</name>
<gene>
    <name type="primary">Ifna7</name>
    <name type="synonym">Ifa7</name>
</gene>
<reference key="1">
    <citation type="journal article" date="1986" name="Biochem. Biophys. Res. Commun.">
        <title>Sequence and expression of a novel murine interferon alpha gene -- homology with enhancer elements in the regulatory region of the gene.</title>
        <authorList>
            <person name="Dion M."/>
            <person name="Vodjdani G."/>
            <person name="Doly J."/>
        </authorList>
    </citation>
    <scope>NUCLEOTIDE SEQUENCE [GENOMIC DNA]</scope>
</reference>
<protein>
    <recommendedName>
        <fullName>Interferon alpha-7</fullName>
        <shortName>IFN-alpha-7</shortName>
    </recommendedName>
</protein>
<evidence type="ECO:0000250" key="1"/>
<evidence type="ECO:0000305" key="2"/>